<organism>
    <name type="scientific">Methanococcus maripaludis (strain DSM 14266 / JCM 13030 / NBRC 101832 / S2 / LL)</name>
    <dbReference type="NCBI Taxonomy" id="267377"/>
    <lineage>
        <taxon>Archaea</taxon>
        <taxon>Methanobacteriati</taxon>
        <taxon>Methanobacteriota</taxon>
        <taxon>Methanomada group</taxon>
        <taxon>Methanococci</taxon>
        <taxon>Methanococcales</taxon>
        <taxon>Methanococcaceae</taxon>
        <taxon>Methanococcus</taxon>
    </lineage>
</organism>
<comment type="similarity">
    <text evidence="1">Belongs to the UPF0254 family.</text>
</comment>
<protein>
    <recommendedName>
        <fullName evidence="1">UPF0254 protein MMP0935</fullName>
    </recommendedName>
</protein>
<name>Y935_METMP</name>
<sequence length="165" mass="18425">MISVATAECFTHGKIGTKIHKIACGYKEFEKDSNYDMIHGNVYVMASMFLPSKKGIESLLDVNLPKPDYVFKYSKAYNQENDILVAKLVAKALKNKLNCNIAISSTAGIGNGAVCIVTDYNDYVFSSDIYGDLLKGQNIIKRQESGIEKAYNTFIDILKKEYNLK</sequence>
<keyword id="KW-1185">Reference proteome</keyword>
<reference key="1">
    <citation type="journal article" date="2004" name="J. Bacteriol.">
        <title>Complete genome sequence of the genetically tractable hydrogenotrophic methanogen Methanococcus maripaludis.</title>
        <authorList>
            <person name="Hendrickson E.L."/>
            <person name="Kaul R."/>
            <person name="Zhou Y."/>
            <person name="Bovee D."/>
            <person name="Chapman P."/>
            <person name="Chung J."/>
            <person name="Conway de Macario E."/>
            <person name="Dodsworth J.A."/>
            <person name="Gillett W."/>
            <person name="Graham D.E."/>
            <person name="Hackett M."/>
            <person name="Haydock A.K."/>
            <person name="Kang A."/>
            <person name="Land M.L."/>
            <person name="Levy R."/>
            <person name="Lie T.J."/>
            <person name="Major T.A."/>
            <person name="Moore B.C."/>
            <person name="Porat I."/>
            <person name="Palmeiri A."/>
            <person name="Rouse G."/>
            <person name="Saenphimmachak C."/>
            <person name="Soell D."/>
            <person name="Van Dien S."/>
            <person name="Wang T."/>
            <person name="Whitman W.B."/>
            <person name="Xia Q."/>
            <person name="Zhang Y."/>
            <person name="Larimer F.W."/>
            <person name="Olson M.V."/>
            <person name="Leigh J.A."/>
        </authorList>
    </citation>
    <scope>NUCLEOTIDE SEQUENCE [LARGE SCALE GENOMIC DNA]</scope>
    <source>
        <strain>DSM 14266 / JCM 13030 / NBRC 101832 / S2 / LL</strain>
    </source>
</reference>
<proteinExistence type="inferred from homology"/>
<dbReference type="EMBL" id="BX950229">
    <property type="protein sequence ID" value="CAF30491.1"/>
    <property type="molecule type" value="Genomic_DNA"/>
</dbReference>
<dbReference type="RefSeq" id="WP_011170879.1">
    <property type="nucleotide sequence ID" value="NC_005791.1"/>
</dbReference>
<dbReference type="SMR" id="Q6LYQ3"/>
<dbReference type="STRING" id="267377.MMP0935"/>
<dbReference type="EnsemblBacteria" id="CAF30491">
    <property type="protein sequence ID" value="CAF30491"/>
    <property type="gene ID" value="MMP0935"/>
</dbReference>
<dbReference type="GeneID" id="2762256"/>
<dbReference type="KEGG" id="mmp:MMP0935"/>
<dbReference type="PATRIC" id="fig|267377.15.peg.963"/>
<dbReference type="eggNOG" id="arCOG04865">
    <property type="taxonomic scope" value="Archaea"/>
</dbReference>
<dbReference type="HOGENOM" id="CLU_1451416_0_0_2"/>
<dbReference type="OrthoDB" id="59686at2157"/>
<dbReference type="Proteomes" id="UP000000590">
    <property type="component" value="Chromosome"/>
</dbReference>
<dbReference type="HAMAP" id="MF_00673">
    <property type="entry name" value="UPF0254"/>
    <property type="match status" value="1"/>
</dbReference>
<dbReference type="InterPro" id="IPR009625">
    <property type="entry name" value="HcgF"/>
</dbReference>
<dbReference type="NCBIfam" id="NF002122">
    <property type="entry name" value="PRK00962.1"/>
    <property type="match status" value="1"/>
</dbReference>
<dbReference type="Pfam" id="PF06787">
    <property type="entry name" value="HcgF"/>
    <property type="match status" value="1"/>
</dbReference>
<dbReference type="PIRSF" id="PIRSF018786">
    <property type="entry name" value="UPF0254"/>
    <property type="match status" value="1"/>
</dbReference>
<feature type="chain" id="PRO_1000147678" description="UPF0254 protein MMP0935">
    <location>
        <begin position="1"/>
        <end position="165"/>
    </location>
</feature>
<accession>Q6LYQ3</accession>
<evidence type="ECO:0000255" key="1">
    <source>
        <dbReference type="HAMAP-Rule" id="MF_00673"/>
    </source>
</evidence>
<gene>
    <name type="ordered locus">MMP0935</name>
</gene>